<dbReference type="EMBL" id="CP000926">
    <property type="protein sequence ID" value="ABZ00447.1"/>
    <property type="molecule type" value="Genomic_DNA"/>
</dbReference>
<dbReference type="SMR" id="B0KGQ1"/>
<dbReference type="KEGG" id="ppg:PputGB1_4560"/>
<dbReference type="eggNOG" id="COG3022">
    <property type="taxonomic scope" value="Bacteria"/>
</dbReference>
<dbReference type="HOGENOM" id="CLU_061989_0_0_6"/>
<dbReference type="Proteomes" id="UP000002157">
    <property type="component" value="Chromosome"/>
</dbReference>
<dbReference type="GO" id="GO:0005829">
    <property type="term" value="C:cytosol"/>
    <property type="evidence" value="ECO:0007669"/>
    <property type="project" value="TreeGrafter"/>
</dbReference>
<dbReference type="GO" id="GO:0033194">
    <property type="term" value="P:response to hydroperoxide"/>
    <property type="evidence" value="ECO:0007669"/>
    <property type="project" value="TreeGrafter"/>
</dbReference>
<dbReference type="HAMAP" id="MF_00652">
    <property type="entry name" value="UPF0246"/>
    <property type="match status" value="1"/>
</dbReference>
<dbReference type="InterPro" id="IPR005583">
    <property type="entry name" value="YaaA"/>
</dbReference>
<dbReference type="NCBIfam" id="NF002541">
    <property type="entry name" value="PRK02101.1-1"/>
    <property type="match status" value="1"/>
</dbReference>
<dbReference type="NCBIfam" id="NF002542">
    <property type="entry name" value="PRK02101.1-3"/>
    <property type="match status" value="1"/>
</dbReference>
<dbReference type="PANTHER" id="PTHR30283:SF4">
    <property type="entry name" value="PEROXIDE STRESS RESISTANCE PROTEIN YAAA"/>
    <property type="match status" value="1"/>
</dbReference>
<dbReference type="PANTHER" id="PTHR30283">
    <property type="entry name" value="PEROXIDE STRESS RESPONSE PROTEIN YAAA"/>
    <property type="match status" value="1"/>
</dbReference>
<dbReference type="Pfam" id="PF03883">
    <property type="entry name" value="H2O2_YaaD"/>
    <property type="match status" value="1"/>
</dbReference>
<comment type="similarity">
    <text evidence="1">Belongs to the UPF0246 family.</text>
</comment>
<gene>
    <name type="ordered locus">PputGB1_4560</name>
</gene>
<feature type="chain" id="PRO_1000082772" description="UPF0246 protein PputGB1_4560">
    <location>
        <begin position="1"/>
        <end position="259"/>
    </location>
</feature>
<reference key="1">
    <citation type="submission" date="2008-01" db="EMBL/GenBank/DDBJ databases">
        <title>Complete sequence of Pseudomonas putida GB-1.</title>
        <authorList>
            <consortium name="US DOE Joint Genome Institute"/>
            <person name="Copeland A."/>
            <person name="Lucas S."/>
            <person name="Lapidus A."/>
            <person name="Barry K."/>
            <person name="Glavina del Rio T."/>
            <person name="Dalin E."/>
            <person name="Tice H."/>
            <person name="Pitluck S."/>
            <person name="Bruce D."/>
            <person name="Goodwin L."/>
            <person name="Chertkov O."/>
            <person name="Brettin T."/>
            <person name="Detter J.C."/>
            <person name="Han C."/>
            <person name="Kuske C.R."/>
            <person name="Schmutz J."/>
            <person name="Larimer F."/>
            <person name="Land M."/>
            <person name="Hauser L."/>
            <person name="Kyrpides N."/>
            <person name="Kim E."/>
            <person name="McCarthy J.K."/>
            <person name="Richardson P."/>
        </authorList>
    </citation>
    <scope>NUCLEOTIDE SEQUENCE [LARGE SCALE GENOMIC DNA]</scope>
    <source>
        <strain>GB-1</strain>
    </source>
</reference>
<evidence type="ECO:0000255" key="1">
    <source>
        <dbReference type="HAMAP-Rule" id="MF_00652"/>
    </source>
</evidence>
<proteinExistence type="inferred from homology"/>
<accession>B0KGQ1</accession>
<organism>
    <name type="scientific">Pseudomonas putida (strain GB-1)</name>
    <dbReference type="NCBI Taxonomy" id="76869"/>
    <lineage>
        <taxon>Bacteria</taxon>
        <taxon>Pseudomonadati</taxon>
        <taxon>Pseudomonadota</taxon>
        <taxon>Gammaproteobacteria</taxon>
        <taxon>Pseudomonadales</taxon>
        <taxon>Pseudomonadaceae</taxon>
        <taxon>Pseudomonas</taxon>
    </lineage>
</organism>
<name>Y4560_PSEPG</name>
<protein>
    <recommendedName>
        <fullName evidence="1">UPF0246 protein PputGB1_4560</fullName>
    </recommendedName>
</protein>
<sequence>MLTVISPAKTLDYDTPPVTERFTLPQYLDDSQALIQQLRELSPAQISELMHLSDKLAGLNAARFGSWTPDFTPANAKQALLAFKGDVYTGLDAESLAEDDFSYAQDHLRMLSGLYGLLRPLDLMQPYRLEMGTKLANARGKDLYAFWGTRISEWLNEALAEQGDDVLLNLASNEYFSAVKRSALKARVINVDFKDLKNGQYKIISFYAKKARGMMSRFVIQQRISDPEQLKQFDVQGYYYSAEQSKPDHLVFLRDHPAD</sequence>